<name>UNG_SALPB</name>
<sequence>MATELTWHDVLADEKQQPYFINTLHTVAGERQSGITVYPPQKDVFNAFRFTELGDVKVVILGQDPYHGPGQAHGLAFSVRPGIAPPPSLVNMYKELEASIPGFVRPAHGYLESWARQGVLLLNTVLTVRAGQAHSHASLGWETFTDKVISLINQHREGVVFLLWGSHAQKKGAIIDPQRHHILKAPHPSPLSAHRGFFGCNHFALTNQWLEQHGEKTIDWTPVLPAESE</sequence>
<gene>
    <name evidence="1" type="primary">ung</name>
    <name type="ordered locus">SPAB_00328</name>
</gene>
<evidence type="ECO:0000255" key="1">
    <source>
        <dbReference type="HAMAP-Rule" id="MF_00148"/>
    </source>
</evidence>
<protein>
    <recommendedName>
        <fullName evidence="1">Uracil-DNA glycosylase</fullName>
        <shortName evidence="1">UDG</shortName>
        <ecNumber evidence="1">3.2.2.27</ecNumber>
    </recommendedName>
</protein>
<feature type="chain" id="PRO_1000076679" description="Uracil-DNA glycosylase">
    <location>
        <begin position="1"/>
        <end position="229"/>
    </location>
</feature>
<feature type="active site" description="Proton acceptor" evidence="1">
    <location>
        <position position="64"/>
    </location>
</feature>
<keyword id="KW-0963">Cytoplasm</keyword>
<keyword id="KW-0227">DNA damage</keyword>
<keyword id="KW-0234">DNA repair</keyword>
<keyword id="KW-0378">Hydrolase</keyword>
<reference key="1">
    <citation type="submission" date="2007-11" db="EMBL/GenBank/DDBJ databases">
        <authorList>
            <consortium name="The Salmonella enterica serovar Paratyphi B Genome Sequencing Project"/>
            <person name="McClelland M."/>
            <person name="Sanderson E.K."/>
            <person name="Porwollik S."/>
            <person name="Spieth J."/>
            <person name="Clifton W.S."/>
            <person name="Fulton R."/>
            <person name="Cordes M."/>
            <person name="Wollam A."/>
            <person name="Shah N."/>
            <person name="Pepin K."/>
            <person name="Bhonagiri V."/>
            <person name="Nash W."/>
            <person name="Johnson M."/>
            <person name="Thiruvilangam P."/>
            <person name="Wilson R."/>
        </authorList>
    </citation>
    <scope>NUCLEOTIDE SEQUENCE [LARGE SCALE GENOMIC DNA]</scope>
    <source>
        <strain>ATCC BAA-1250 / SPB7</strain>
    </source>
</reference>
<accession>A9N0W3</accession>
<organism>
    <name type="scientific">Salmonella paratyphi B (strain ATCC BAA-1250 / SPB7)</name>
    <dbReference type="NCBI Taxonomy" id="1016998"/>
    <lineage>
        <taxon>Bacteria</taxon>
        <taxon>Pseudomonadati</taxon>
        <taxon>Pseudomonadota</taxon>
        <taxon>Gammaproteobacteria</taxon>
        <taxon>Enterobacterales</taxon>
        <taxon>Enterobacteriaceae</taxon>
        <taxon>Salmonella</taxon>
    </lineage>
</organism>
<proteinExistence type="inferred from homology"/>
<comment type="function">
    <text evidence="1">Excises uracil residues from the DNA which can arise as a result of misincorporation of dUMP residues by DNA polymerase or due to deamination of cytosine.</text>
</comment>
<comment type="catalytic activity">
    <reaction evidence="1">
        <text>Hydrolyzes single-stranded DNA or mismatched double-stranded DNA and polynucleotides, releasing free uracil.</text>
        <dbReference type="EC" id="3.2.2.27"/>
    </reaction>
</comment>
<comment type="subcellular location">
    <subcellularLocation>
        <location evidence="1">Cytoplasm</location>
    </subcellularLocation>
</comment>
<comment type="similarity">
    <text evidence="1">Belongs to the uracil-DNA glycosylase (UDG) superfamily. UNG family.</text>
</comment>
<dbReference type="EC" id="3.2.2.27" evidence="1"/>
<dbReference type="EMBL" id="CP000886">
    <property type="protein sequence ID" value="ABX65765.1"/>
    <property type="molecule type" value="Genomic_DNA"/>
</dbReference>
<dbReference type="RefSeq" id="WP_000179978.1">
    <property type="nucleotide sequence ID" value="NC_010102.1"/>
</dbReference>
<dbReference type="SMR" id="A9N0W3"/>
<dbReference type="KEGG" id="spq:SPAB_00328"/>
<dbReference type="PATRIC" id="fig|1016998.12.peg.311"/>
<dbReference type="HOGENOM" id="CLU_032162_3_0_6"/>
<dbReference type="BioCyc" id="SENT1016998:SPAB_RS01345-MONOMER"/>
<dbReference type="Proteomes" id="UP000008556">
    <property type="component" value="Chromosome"/>
</dbReference>
<dbReference type="GO" id="GO:0005737">
    <property type="term" value="C:cytoplasm"/>
    <property type="evidence" value="ECO:0007669"/>
    <property type="project" value="UniProtKB-SubCell"/>
</dbReference>
<dbReference type="GO" id="GO:0004844">
    <property type="term" value="F:uracil DNA N-glycosylase activity"/>
    <property type="evidence" value="ECO:0007669"/>
    <property type="project" value="UniProtKB-UniRule"/>
</dbReference>
<dbReference type="GO" id="GO:0097510">
    <property type="term" value="P:base-excision repair, AP site formation via deaminated base removal"/>
    <property type="evidence" value="ECO:0007669"/>
    <property type="project" value="TreeGrafter"/>
</dbReference>
<dbReference type="CDD" id="cd10027">
    <property type="entry name" value="UDG-F1-like"/>
    <property type="match status" value="1"/>
</dbReference>
<dbReference type="FunFam" id="3.40.470.10:FF:000001">
    <property type="entry name" value="Uracil-DNA glycosylase"/>
    <property type="match status" value="1"/>
</dbReference>
<dbReference type="Gene3D" id="3.40.470.10">
    <property type="entry name" value="Uracil-DNA glycosylase-like domain"/>
    <property type="match status" value="1"/>
</dbReference>
<dbReference type="HAMAP" id="MF_00148">
    <property type="entry name" value="UDG"/>
    <property type="match status" value="1"/>
</dbReference>
<dbReference type="InterPro" id="IPR002043">
    <property type="entry name" value="UDG_fam1"/>
</dbReference>
<dbReference type="InterPro" id="IPR018085">
    <property type="entry name" value="Ura-DNA_Glyclase_AS"/>
</dbReference>
<dbReference type="InterPro" id="IPR005122">
    <property type="entry name" value="Uracil-DNA_glycosylase-like"/>
</dbReference>
<dbReference type="InterPro" id="IPR036895">
    <property type="entry name" value="Uracil-DNA_glycosylase-like_sf"/>
</dbReference>
<dbReference type="NCBIfam" id="NF003588">
    <property type="entry name" value="PRK05254.1-1"/>
    <property type="match status" value="1"/>
</dbReference>
<dbReference type="NCBIfam" id="NF003589">
    <property type="entry name" value="PRK05254.1-2"/>
    <property type="match status" value="1"/>
</dbReference>
<dbReference type="NCBIfam" id="NF003591">
    <property type="entry name" value="PRK05254.1-4"/>
    <property type="match status" value="1"/>
</dbReference>
<dbReference type="NCBIfam" id="NF003592">
    <property type="entry name" value="PRK05254.1-5"/>
    <property type="match status" value="1"/>
</dbReference>
<dbReference type="NCBIfam" id="TIGR00628">
    <property type="entry name" value="ung"/>
    <property type="match status" value="1"/>
</dbReference>
<dbReference type="PANTHER" id="PTHR11264">
    <property type="entry name" value="URACIL-DNA GLYCOSYLASE"/>
    <property type="match status" value="1"/>
</dbReference>
<dbReference type="PANTHER" id="PTHR11264:SF0">
    <property type="entry name" value="URACIL-DNA GLYCOSYLASE"/>
    <property type="match status" value="1"/>
</dbReference>
<dbReference type="Pfam" id="PF03167">
    <property type="entry name" value="UDG"/>
    <property type="match status" value="1"/>
</dbReference>
<dbReference type="SMART" id="SM00986">
    <property type="entry name" value="UDG"/>
    <property type="match status" value="1"/>
</dbReference>
<dbReference type="SMART" id="SM00987">
    <property type="entry name" value="UreE_C"/>
    <property type="match status" value="1"/>
</dbReference>
<dbReference type="SUPFAM" id="SSF52141">
    <property type="entry name" value="Uracil-DNA glycosylase-like"/>
    <property type="match status" value="1"/>
</dbReference>
<dbReference type="PROSITE" id="PS00130">
    <property type="entry name" value="U_DNA_GLYCOSYLASE"/>
    <property type="match status" value="1"/>
</dbReference>